<keyword id="KW-0963">Cytoplasm</keyword>
<keyword id="KW-0378">Hydrolase</keyword>
<keyword id="KW-0520">NAD</keyword>
<keyword id="KW-0554">One-carbon metabolism</keyword>
<keyword id="KW-1185">Reference proteome</keyword>
<proteinExistence type="inferred from homology"/>
<sequence length="466" mass="50776">MTASQDFVVKDLSLADWGRKELDIAETEMPGLMAAREEFGKSQPLKGARISGSLHMTIQTAVLIETLQALGAEVRWASCNIFSTQDHAAAAIAATGTPVFAIKGETLEEYWTYTDQIFQWPDGEPSNMILDDGGDATMYILIGARAEAGEDVLSNPGSEEEEVLFAQIKKRMAATPGFFTRQRDAIKGVTEETTTGVNRLYQLQKKGLLPFPAINVNDSVTKSKFDNKYGCKESLVDGIRRGTDVMMAGKVAVVCGYGDVGKGSAQSLAGAGARVKVTEVDPICALQAAMDGFEVVTLDDAASTADIIVTTTGNKDVITIDHMRKFKDMAIVGNIGHFDNEIQVAALRNLKWTNVKPQVDLIEFPDGKRIILLSEGRLLNLGNATGHPSFVMSASFTNQVLGQIELFTRTDAYKNEVYVLPKHLDEKVARLHLDKLGAKLTVLSEEQAAYIGVTPQGPFKSEHYRY</sequence>
<protein>
    <recommendedName>
        <fullName evidence="1">Adenosylhomocysteinase</fullName>
        <ecNumber evidence="1">3.13.2.1</ecNumber>
    </recommendedName>
    <alternativeName>
        <fullName evidence="1">S-adenosyl-L-homocysteine hydrolase</fullName>
        <shortName evidence="1">AdoHcyase</shortName>
    </alternativeName>
</protein>
<accession>A6WX40</accession>
<name>SAHH_BRUA4</name>
<reference key="1">
    <citation type="journal article" date="2011" name="J. Bacteriol.">
        <title>Genome of Ochrobactrum anthropi ATCC 49188 T, a versatile opportunistic pathogen and symbiont of several eukaryotic hosts.</title>
        <authorList>
            <person name="Chain P.S."/>
            <person name="Lang D.M."/>
            <person name="Comerci D.J."/>
            <person name="Malfatti S.A."/>
            <person name="Vergez L.M."/>
            <person name="Shin M."/>
            <person name="Ugalde R.A."/>
            <person name="Garcia E."/>
            <person name="Tolmasky M.E."/>
        </authorList>
    </citation>
    <scope>NUCLEOTIDE SEQUENCE [LARGE SCALE GENOMIC DNA]</scope>
    <source>
        <strain>ATCC 49188 / DSM 6882 / CCUG 24695 / JCM 21032 / LMG 3331 / NBRC 15819 / NCTC 12168 / Alc 37</strain>
    </source>
</reference>
<comment type="function">
    <text evidence="1">May play a key role in the regulation of the intracellular concentration of adenosylhomocysteine.</text>
</comment>
<comment type="catalytic activity">
    <reaction evidence="1">
        <text>S-adenosyl-L-homocysteine + H2O = L-homocysteine + adenosine</text>
        <dbReference type="Rhea" id="RHEA:21708"/>
        <dbReference type="ChEBI" id="CHEBI:15377"/>
        <dbReference type="ChEBI" id="CHEBI:16335"/>
        <dbReference type="ChEBI" id="CHEBI:57856"/>
        <dbReference type="ChEBI" id="CHEBI:58199"/>
        <dbReference type="EC" id="3.13.2.1"/>
    </reaction>
</comment>
<comment type="cofactor">
    <cofactor evidence="1">
        <name>NAD(+)</name>
        <dbReference type="ChEBI" id="CHEBI:57540"/>
    </cofactor>
    <text evidence="1">Binds 1 NAD(+) per subunit.</text>
</comment>
<comment type="pathway">
    <text evidence="1">Amino-acid biosynthesis; L-homocysteine biosynthesis; L-homocysteine from S-adenosyl-L-homocysteine: step 1/1.</text>
</comment>
<comment type="subcellular location">
    <subcellularLocation>
        <location evidence="1">Cytoplasm</location>
    </subcellularLocation>
</comment>
<comment type="similarity">
    <text evidence="1">Belongs to the adenosylhomocysteinase family.</text>
</comment>
<dbReference type="EC" id="3.13.2.1" evidence="1"/>
<dbReference type="EMBL" id="CP000758">
    <property type="protein sequence ID" value="ABS13544.1"/>
    <property type="molecule type" value="Genomic_DNA"/>
</dbReference>
<dbReference type="RefSeq" id="WP_012091050.1">
    <property type="nucleotide sequence ID" value="NC_009667.1"/>
</dbReference>
<dbReference type="SMR" id="A6WX40"/>
<dbReference type="STRING" id="439375.Oant_0822"/>
<dbReference type="KEGG" id="oan:Oant_0822"/>
<dbReference type="PATRIC" id="fig|439375.7.peg.867"/>
<dbReference type="eggNOG" id="COG0499">
    <property type="taxonomic scope" value="Bacteria"/>
</dbReference>
<dbReference type="HOGENOM" id="CLU_025194_2_1_5"/>
<dbReference type="UniPathway" id="UPA00314">
    <property type="reaction ID" value="UER00076"/>
</dbReference>
<dbReference type="Proteomes" id="UP000002301">
    <property type="component" value="Chromosome 1"/>
</dbReference>
<dbReference type="GO" id="GO:0005829">
    <property type="term" value="C:cytosol"/>
    <property type="evidence" value="ECO:0007669"/>
    <property type="project" value="TreeGrafter"/>
</dbReference>
<dbReference type="GO" id="GO:0004013">
    <property type="term" value="F:adenosylhomocysteinase activity"/>
    <property type="evidence" value="ECO:0007669"/>
    <property type="project" value="UniProtKB-UniRule"/>
</dbReference>
<dbReference type="GO" id="GO:0071269">
    <property type="term" value="P:L-homocysteine biosynthetic process"/>
    <property type="evidence" value="ECO:0007669"/>
    <property type="project" value="UniProtKB-UniRule"/>
</dbReference>
<dbReference type="GO" id="GO:0006730">
    <property type="term" value="P:one-carbon metabolic process"/>
    <property type="evidence" value="ECO:0007669"/>
    <property type="project" value="UniProtKB-KW"/>
</dbReference>
<dbReference type="GO" id="GO:0033353">
    <property type="term" value="P:S-adenosylmethionine cycle"/>
    <property type="evidence" value="ECO:0007669"/>
    <property type="project" value="TreeGrafter"/>
</dbReference>
<dbReference type="CDD" id="cd00401">
    <property type="entry name" value="SAHH"/>
    <property type="match status" value="1"/>
</dbReference>
<dbReference type="FunFam" id="3.40.50.720:FF:000004">
    <property type="entry name" value="Adenosylhomocysteinase"/>
    <property type="match status" value="1"/>
</dbReference>
<dbReference type="Gene3D" id="3.40.50.1480">
    <property type="entry name" value="Adenosylhomocysteinase-like"/>
    <property type="match status" value="1"/>
</dbReference>
<dbReference type="Gene3D" id="3.40.50.720">
    <property type="entry name" value="NAD(P)-binding Rossmann-like Domain"/>
    <property type="match status" value="1"/>
</dbReference>
<dbReference type="HAMAP" id="MF_00563">
    <property type="entry name" value="AdoHcyase"/>
    <property type="match status" value="1"/>
</dbReference>
<dbReference type="InterPro" id="IPR042172">
    <property type="entry name" value="Adenosylhomocyst_ase-like_sf"/>
</dbReference>
<dbReference type="InterPro" id="IPR000043">
    <property type="entry name" value="Adenosylhomocysteinase-like"/>
</dbReference>
<dbReference type="InterPro" id="IPR015878">
    <property type="entry name" value="Ado_hCys_hydrolase_NAD-bd"/>
</dbReference>
<dbReference type="InterPro" id="IPR036291">
    <property type="entry name" value="NAD(P)-bd_dom_sf"/>
</dbReference>
<dbReference type="InterPro" id="IPR020082">
    <property type="entry name" value="S-Ado-L-homoCys_hydrolase_CS"/>
</dbReference>
<dbReference type="NCBIfam" id="TIGR00936">
    <property type="entry name" value="ahcY"/>
    <property type="match status" value="1"/>
</dbReference>
<dbReference type="NCBIfam" id="NF004005">
    <property type="entry name" value="PRK05476.2-3"/>
    <property type="match status" value="1"/>
</dbReference>
<dbReference type="PANTHER" id="PTHR23420">
    <property type="entry name" value="ADENOSYLHOMOCYSTEINASE"/>
    <property type="match status" value="1"/>
</dbReference>
<dbReference type="PANTHER" id="PTHR23420:SF0">
    <property type="entry name" value="ADENOSYLHOMOCYSTEINASE"/>
    <property type="match status" value="1"/>
</dbReference>
<dbReference type="Pfam" id="PF05221">
    <property type="entry name" value="AdoHcyase"/>
    <property type="match status" value="1"/>
</dbReference>
<dbReference type="Pfam" id="PF00670">
    <property type="entry name" value="AdoHcyase_NAD"/>
    <property type="match status" value="1"/>
</dbReference>
<dbReference type="PIRSF" id="PIRSF001109">
    <property type="entry name" value="Ad_hcy_hydrolase"/>
    <property type="match status" value="1"/>
</dbReference>
<dbReference type="SMART" id="SM00996">
    <property type="entry name" value="AdoHcyase"/>
    <property type="match status" value="1"/>
</dbReference>
<dbReference type="SMART" id="SM00997">
    <property type="entry name" value="AdoHcyase_NAD"/>
    <property type="match status" value="1"/>
</dbReference>
<dbReference type="SUPFAM" id="SSF52283">
    <property type="entry name" value="Formate/glycerate dehydrogenase catalytic domain-like"/>
    <property type="match status" value="1"/>
</dbReference>
<dbReference type="SUPFAM" id="SSF51735">
    <property type="entry name" value="NAD(P)-binding Rossmann-fold domains"/>
    <property type="match status" value="1"/>
</dbReference>
<dbReference type="PROSITE" id="PS00738">
    <property type="entry name" value="ADOHCYASE_1"/>
    <property type="match status" value="1"/>
</dbReference>
<dbReference type="PROSITE" id="PS00739">
    <property type="entry name" value="ADOHCYASE_2"/>
    <property type="match status" value="1"/>
</dbReference>
<organism>
    <name type="scientific">Brucella anthropi (strain ATCC 49188 / DSM 6882 / CCUG 24695 / JCM 21032 / LMG 3331 / NBRC 15819 / NCTC 12168 / Alc 37)</name>
    <name type="common">Ochrobactrum anthropi</name>
    <dbReference type="NCBI Taxonomy" id="439375"/>
    <lineage>
        <taxon>Bacteria</taxon>
        <taxon>Pseudomonadati</taxon>
        <taxon>Pseudomonadota</taxon>
        <taxon>Alphaproteobacteria</taxon>
        <taxon>Hyphomicrobiales</taxon>
        <taxon>Brucellaceae</taxon>
        <taxon>Brucella/Ochrobactrum group</taxon>
        <taxon>Brucella</taxon>
    </lineage>
</organism>
<evidence type="ECO:0000255" key="1">
    <source>
        <dbReference type="HAMAP-Rule" id="MF_00563"/>
    </source>
</evidence>
<gene>
    <name evidence="1" type="primary">ahcY</name>
    <name type="ordered locus">Oant_0822</name>
</gene>
<feature type="chain" id="PRO_1000024741" description="Adenosylhomocysteinase">
    <location>
        <begin position="1"/>
        <end position="466"/>
    </location>
</feature>
<feature type="binding site" evidence="1">
    <location>
        <position position="57"/>
    </location>
    <ligand>
        <name>substrate</name>
    </ligand>
</feature>
<feature type="binding site" evidence="1">
    <location>
        <position position="132"/>
    </location>
    <ligand>
        <name>substrate</name>
    </ligand>
</feature>
<feature type="binding site" evidence="1">
    <location>
        <position position="192"/>
    </location>
    <ligand>
        <name>substrate</name>
    </ligand>
</feature>
<feature type="binding site" evidence="1">
    <location>
        <begin position="193"/>
        <end position="195"/>
    </location>
    <ligand>
        <name>NAD(+)</name>
        <dbReference type="ChEBI" id="CHEBI:57540"/>
    </ligand>
</feature>
<feature type="binding site" evidence="1">
    <location>
        <position position="222"/>
    </location>
    <ligand>
        <name>substrate</name>
    </ligand>
</feature>
<feature type="binding site" evidence="1">
    <location>
        <position position="226"/>
    </location>
    <ligand>
        <name>substrate</name>
    </ligand>
</feature>
<feature type="binding site" evidence="1">
    <location>
        <position position="227"/>
    </location>
    <ligand>
        <name>NAD(+)</name>
        <dbReference type="ChEBI" id="CHEBI:57540"/>
    </ligand>
</feature>
<feature type="binding site" evidence="1">
    <location>
        <begin position="256"/>
        <end position="261"/>
    </location>
    <ligand>
        <name>NAD(+)</name>
        <dbReference type="ChEBI" id="CHEBI:57540"/>
    </ligand>
</feature>
<feature type="binding site" evidence="1">
    <location>
        <position position="279"/>
    </location>
    <ligand>
        <name>NAD(+)</name>
        <dbReference type="ChEBI" id="CHEBI:57540"/>
    </ligand>
</feature>
<feature type="binding site" evidence="1">
    <location>
        <position position="314"/>
    </location>
    <ligand>
        <name>NAD(+)</name>
        <dbReference type="ChEBI" id="CHEBI:57540"/>
    </ligand>
</feature>
<feature type="binding site" evidence="1">
    <location>
        <begin position="335"/>
        <end position="337"/>
    </location>
    <ligand>
        <name>NAD(+)</name>
        <dbReference type="ChEBI" id="CHEBI:57540"/>
    </ligand>
</feature>
<feature type="binding site" evidence="1">
    <location>
        <position position="380"/>
    </location>
    <ligand>
        <name>NAD(+)</name>
        <dbReference type="ChEBI" id="CHEBI:57540"/>
    </ligand>
</feature>